<evidence type="ECO:0000255" key="1"/>
<evidence type="ECO:0000255" key="2">
    <source>
        <dbReference type="PROSITE-ProRule" id="PRU00159"/>
    </source>
</evidence>
<evidence type="ECO:0000255" key="3">
    <source>
        <dbReference type="PROSITE-ProRule" id="PRU10027"/>
    </source>
</evidence>
<evidence type="ECO:0000256" key="4">
    <source>
        <dbReference type="SAM" id="MobiDB-lite"/>
    </source>
</evidence>
<evidence type="ECO:0000305" key="5"/>
<reference key="1">
    <citation type="journal article" date="2005" name="Nature">
        <title>The genome of the social amoeba Dictyostelium discoideum.</title>
        <authorList>
            <person name="Eichinger L."/>
            <person name="Pachebat J.A."/>
            <person name="Gloeckner G."/>
            <person name="Rajandream M.A."/>
            <person name="Sucgang R."/>
            <person name="Berriman M."/>
            <person name="Song J."/>
            <person name="Olsen R."/>
            <person name="Szafranski K."/>
            <person name="Xu Q."/>
            <person name="Tunggal B."/>
            <person name="Kummerfeld S."/>
            <person name="Madera M."/>
            <person name="Konfortov B.A."/>
            <person name="Rivero F."/>
            <person name="Bankier A.T."/>
            <person name="Lehmann R."/>
            <person name="Hamlin N."/>
            <person name="Davies R."/>
            <person name="Gaudet P."/>
            <person name="Fey P."/>
            <person name="Pilcher K."/>
            <person name="Chen G."/>
            <person name="Saunders D."/>
            <person name="Sodergren E.J."/>
            <person name="Davis P."/>
            <person name="Kerhornou A."/>
            <person name="Nie X."/>
            <person name="Hall N."/>
            <person name="Anjard C."/>
            <person name="Hemphill L."/>
            <person name="Bason N."/>
            <person name="Farbrother P."/>
            <person name="Desany B."/>
            <person name="Just E."/>
            <person name="Morio T."/>
            <person name="Rost R."/>
            <person name="Churcher C.M."/>
            <person name="Cooper J."/>
            <person name="Haydock S."/>
            <person name="van Driessche N."/>
            <person name="Cronin A."/>
            <person name="Goodhead I."/>
            <person name="Muzny D.M."/>
            <person name="Mourier T."/>
            <person name="Pain A."/>
            <person name="Lu M."/>
            <person name="Harper D."/>
            <person name="Lindsay R."/>
            <person name="Hauser H."/>
            <person name="James K.D."/>
            <person name="Quiles M."/>
            <person name="Madan Babu M."/>
            <person name="Saito T."/>
            <person name="Buchrieser C."/>
            <person name="Wardroper A."/>
            <person name="Felder M."/>
            <person name="Thangavelu M."/>
            <person name="Johnson D."/>
            <person name="Knights A."/>
            <person name="Loulseged H."/>
            <person name="Mungall K.L."/>
            <person name="Oliver K."/>
            <person name="Price C."/>
            <person name="Quail M.A."/>
            <person name="Urushihara H."/>
            <person name="Hernandez J."/>
            <person name="Rabbinowitsch E."/>
            <person name="Steffen D."/>
            <person name="Sanders M."/>
            <person name="Ma J."/>
            <person name="Kohara Y."/>
            <person name="Sharp S."/>
            <person name="Simmonds M.N."/>
            <person name="Spiegler S."/>
            <person name="Tivey A."/>
            <person name="Sugano S."/>
            <person name="White B."/>
            <person name="Walker D."/>
            <person name="Woodward J.R."/>
            <person name="Winckler T."/>
            <person name="Tanaka Y."/>
            <person name="Shaulsky G."/>
            <person name="Schleicher M."/>
            <person name="Weinstock G.M."/>
            <person name="Rosenthal A."/>
            <person name="Cox E.C."/>
            <person name="Chisholm R.L."/>
            <person name="Gibbs R.A."/>
            <person name="Loomis W.F."/>
            <person name="Platzer M."/>
            <person name="Kay R.R."/>
            <person name="Williams J.G."/>
            <person name="Dear P.H."/>
            <person name="Noegel A.A."/>
            <person name="Barrell B.G."/>
            <person name="Kuspa A."/>
        </authorList>
    </citation>
    <scope>NUCLEOTIDE SEQUENCE [LARGE SCALE GENOMIC DNA]</scope>
    <source>
        <strain>AX4</strain>
    </source>
</reference>
<accession>Q54H46</accession>
<protein>
    <recommendedName>
        <fullName>Probable serine/threonine-protein kinase drkA</fullName>
        <ecNumber>2.7.11.1</ecNumber>
    </recommendedName>
    <alternativeName>
        <fullName>Receptor-like kinase 1</fullName>
    </alternativeName>
    <alternativeName>
        <fullName>Receptor-like kinase A</fullName>
    </alternativeName>
    <alternativeName>
        <fullName>Vesicle-associated receptor tyrosine kinase-like protein 1</fullName>
    </alternativeName>
</protein>
<organism>
    <name type="scientific">Dictyostelium discoideum</name>
    <name type="common">Social amoeba</name>
    <dbReference type="NCBI Taxonomy" id="44689"/>
    <lineage>
        <taxon>Eukaryota</taxon>
        <taxon>Amoebozoa</taxon>
        <taxon>Evosea</taxon>
        <taxon>Eumycetozoa</taxon>
        <taxon>Dictyostelia</taxon>
        <taxon>Dictyosteliales</taxon>
        <taxon>Dictyosteliaceae</taxon>
        <taxon>Dictyostelium</taxon>
    </lineage>
</organism>
<sequence>MKKLPFLIIIIYIFLILISISSSIDYNYNNDIDNNNNNIINRNKNKNKNNLYNNKVIIKNDDNDDEINNKFKIRLDDNEDQDIYNEYHFLSKVHNRLAFNIFGSSSENSGSGSNSNSNSKNTDSSTGPTPSPISINGTLNSTATVYWSGGKSSCKSVNCTEEGFSTGDSYACSYEITPTYQRGQWEKGVKYFKDPLPKSILTSQVVGVSFVINGVVGCTPLKQELTTIEFLIQDVQVGQTISTNRSDDCSCGICYKDYEILPQSYDLLGYNKSGLNKVQLLLLDNSICATSLDIIFYYHPSTIPPTPTPTPSKPTISLLKKYLIIGFSIVGGLLIIGGCFLLIRNRYRSSGYYKPDKNDYTQIKDGKDIDIHQIKIGVRIGKGNYGEVYLGTWRGSQVAVKKLPAHNINENILKEFHREINLMKNLRHPNVIQFLGSCLIPPDICICTEYMPRGSLYSILHDQALQLQWSLLIKMMIDAAKGVIYLHNSTPVILHRDLKSHNLLVDENWKVKVADFGLSTIEQQGATMTACGTPCWTSPEVLRSQRYTEKADVYSFGIILWECATRQDPYFGIPPFQVIFAVGREGMRPPVPQNGPPKYIQLLIDCLNENPSHRPTMEQCLERLESIDSSGYSDLQYVRQQL</sequence>
<gene>
    <name type="primary">drkA</name>
    <name type="synonym">rk1</name>
    <name type="synonym">vsk1</name>
    <name type="ORF">DDB_G0289791</name>
</gene>
<dbReference type="EC" id="2.7.11.1"/>
<dbReference type="EMBL" id="AAFI02000148">
    <property type="protein sequence ID" value="EAL62607.1"/>
    <property type="molecule type" value="Genomic_DNA"/>
</dbReference>
<dbReference type="RefSeq" id="XP_636072.1">
    <property type="nucleotide sequence ID" value="XM_630980.1"/>
</dbReference>
<dbReference type="SMR" id="Q54H46"/>
<dbReference type="FunCoup" id="Q54H46">
    <property type="interactions" value="1"/>
</dbReference>
<dbReference type="STRING" id="44689.Q54H46"/>
<dbReference type="GlyCosmos" id="Q54H46">
    <property type="glycosylation" value="5 sites, No reported glycans"/>
</dbReference>
<dbReference type="GlyGen" id="Q54H46">
    <property type="glycosylation" value="9 sites"/>
</dbReference>
<dbReference type="PaxDb" id="44689-DDB0230060"/>
<dbReference type="ABCD" id="Q54H46">
    <property type="antibodies" value="4 sequenced antibodies"/>
</dbReference>
<dbReference type="EnsemblProtists" id="EAL62607">
    <property type="protein sequence ID" value="EAL62607"/>
    <property type="gene ID" value="DDB_G0289791"/>
</dbReference>
<dbReference type="GeneID" id="8627282"/>
<dbReference type="KEGG" id="ddi:DDB_G0289791"/>
<dbReference type="dictyBase" id="DDB_G0289791">
    <property type="gene designation" value="drkA"/>
</dbReference>
<dbReference type="VEuPathDB" id="AmoebaDB:DDB_G0289791"/>
<dbReference type="eggNOG" id="KOG0192">
    <property type="taxonomic scope" value="Eukaryota"/>
</dbReference>
<dbReference type="HOGENOM" id="CLU_399254_0_0_1"/>
<dbReference type="InParanoid" id="Q54H46"/>
<dbReference type="OMA" id="NENPSHR"/>
<dbReference type="Reactome" id="R-DDI-5675482">
    <property type="pathway name" value="Regulation of necroptotic cell death"/>
</dbReference>
<dbReference type="PRO" id="PR:Q54H46"/>
<dbReference type="Proteomes" id="UP000002195">
    <property type="component" value="Chromosome 5"/>
</dbReference>
<dbReference type="GO" id="GO:0005737">
    <property type="term" value="C:cytoplasm"/>
    <property type="evidence" value="ECO:0000318"/>
    <property type="project" value="GO_Central"/>
</dbReference>
<dbReference type="GO" id="GO:0016020">
    <property type="term" value="C:membrane"/>
    <property type="evidence" value="ECO:0007669"/>
    <property type="project" value="UniProtKB-SubCell"/>
</dbReference>
<dbReference type="GO" id="GO:0005524">
    <property type="term" value="F:ATP binding"/>
    <property type="evidence" value="ECO:0007669"/>
    <property type="project" value="UniProtKB-KW"/>
</dbReference>
<dbReference type="GO" id="GO:0004672">
    <property type="term" value="F:protein kinase activity"/>
    <property type="evidence" value="ECO:0000318"/>
    <property type="project" value="GO_Central"/>
</dbReference>
<dbReference type="GO" id="GO:0106310">
    <property type="term" value="F:protein serine kinase activity"/>
    <property type="evidence" value="ECO:0007669"/>
    <property type="project" value="RHEA"/>
</dbReference>
<dbReference type="GO" id="GO:0004674">
    <property type="term" value="F:protein serine/threonine kinase activity"/>
    <property type="evidence" value="ECO:0007669"/>
    <property type="project" value="UniProtKB-KW"/>
</dbReference>
<dbReference type="GO" id="GO:0004713">
    <property type="term" value="F:protein tyrosine kinase activity"/>
    <property type="evidence" value="ECO:0000314"/>
    <property type="project" value="dictyBase"/>
</dbReference>
<dbReference type="GO" id="GO:0097677">
    <property type="term" value="F:STAT family protein binding"/>
    <property type="evidence" value="ECO:0000353"/>
    <property type="project" value="dictyBase"/>
</dbReference>
<dbReference type="GO" id="GO:0097696">
    <property type="term" value="P:cell surface receptor signaling pathway via STAT"/>
    <property type="evidence" value="ECO:0000315"/>
    <property type="project" value="dictyBase"/>
</dbReference>
<dbReference type="GO" id="GO:0007165">
    <property type="term" value="P:signal transduction"/>
    <property type="evidence" value="ECO:0000318"/>
    <property type="project" value="GO_Central"/>
</dbReference>
<dbReference type="CDD" id="cd13999">
    <property type="entry name" value="STKc_MAP3K-like"/>
    <property type="match status" value="1"/>
</dbReference>
<dbReference type="FunFam" id="1.10.510.10:FF:000476">
    <property type="entry name" value="PAS domain-containing protein tyrosine kinase family protein"/>
    <property type="match status" value="1"/>
</dbReference>
<dbReference type="FunFam" id="3.30.200.20:FF:000060">
    <property type="entry name" value="Serine/threonine-protein kinase isoform 1"/>
    <property type="match status" value="1"/>
</dbReference>
<dbReference type="Gene3D" id="3.30.200.20">
    <property type="entry name" value="Phosphorylase Kinase, domain 1"/>
    <property type="match status" value="1"/>
</dbReference>
<dbReference type="Gene3D" id="1.10.510.10">
    <property type="entry name" value="Transferase(Phosphotransferase) domain 1"/>
    <property type="match status" value="1"/>
</dbReference>
<dbReference type="InterPro" id="IPR011009">
    <property type="entry name" value="Kinase-like_dom_sf"/>
</dbReference>
<dbReference type="InterPro" id="IPR000719">
    <property type="entry name" value="Prot_kinase_dom"/>
</dbReference>
<dbReference type="InterPro" id="IPR017441">
    <property type="entry name" value="Protein_kinase_ATP_BS"/>
</dbReference>
<dbReference type="InterPro" id="IPR001245">
    <property type="entry name" value="Ser-Thr/Tyr_kinase_cat_dom"/>
</dbReference>
<dbReference type="InterPro" id="IPR008271">
    <property type="entry name" value="Ser/Thr_kinase_AS"/>
</dbReference>
<dbReference type="InterPro" id="IPR051681">
    <property type="entry name" value="Ser/Thr_Kinases-Pseudokinases"/>
</dbReference>
<dbReference type="PANTHER" id="PTHR44329:SF298">
    <property type="entry name" value="MIXED LINEAGE KINASE DOMAIN-LIKE PROTEIN"/>
    <property type="match status" value="1"/>
</dbReference>
<dbReference type="PANTHER" id="PTHR44329">
    <property type="entry name" value="SERINE/THREONINE-PROTEIN KINASE TNNI3K-RELATED"/>
    <property type="match status" value="1"/>
</dbReference>
<dbReference type="Pfam" id="PF07714">
    <property type="entry name" value="PK_Tyr_Ser-Thr"/>
    <property type="match status" value="1"/>
</dbReference>
<dbReference type="PRINTS" id="PR00109">
    <property type="entry name" value="TYRKINASE"/>
</dbReference>
<dbReference type="SMART" id="SM00220">
    <property type="entry name" value="S_TKc"/>
    <property type="match status" value="1"/>
</dbReference>
<dbReference type="SUPFAM" id="SSF56112">
    <property type="entry name" value="Protein kinase-like (PK-like)"/>
    <property type="match status" value="1"/>
</dbReference>
<dbReference type="PROSITE" id="PS00107">
    <property type="entry name" value="PROTEIN_KINASE_ATP"/>
    <property type="match status" value="1"/>
</dbReference>
<dbReference type="PROSITE" id="PS50011">
    <property type="entry name" value="PROTEIN_KINASE_DOM"/>
    <property type="match status" value="1"/>
</dbReference>
<dbReference type="PROSITE" id="PS00108">
    <property type="entry name" value="PROTEIN_KINASE_ST"/>
    <property type="match status" value="1"/>
</dbReference>
<proteinExistence type="inferred from homology"/>
<name>DRKA_DICDI</name>
<comment type="catalytic activity">
    <reaction>
        <text>L-seryl-[protein] + ATP = O-phospho-L-seryl-[protein] + ADP + H(+)</text>
        <dbReference type="Rhea" id="RHEA:17989"/>
        <dbReference type="Rhea" id="RHEA-COMP:9863"/>
        <dbReference type="Rhea" id="RHEA-COMP:11604"/>
        <dbReference type="ChEBI" id="CHEBI:15378"/>
        <dbReference type="ChEBI" id="CHEBI:29999"/>
        <dbReference type="ChEBI" id="CHEBI:30616"/>
        <dbReference type="ChEBI" id="CHEBI:83421"/>
        <dbReference type="ChEBI" id="CHEBI:456216"/>
        <dbReference type="EC" id="2.7.11.1"/>
    </reaction>
</comment>
<comment type="catalytic activity">
    <reaction>
        <text>L-threonyl-[protein] + ATP = O-phospho-L-threonyl-[protein] + ADP + H(+)</text>
        <dbReference type="Rhea" id="RHEA:46608"/>
        <dbReference type="Rhea" id="RHEA-COMP:11060"/>
        <dbReference type="Rhea" id="RHEA-COMP:11605"/>
        <dbReference type="ChEBI" id="CHEBI:15378"/>
        <dbReference type="ChEBI" id="CHEBI:30013"/>
        <dbReference type="ChEBI" id="CHEBI:30616"/>
        <dbReference type="ChEBI" id="CHEBI:61977"/>
        <dbReference type="ChEBI" id="CHEBI:456216"/>
        <dbReference type="EC" id="2.7.11.1"/>
    </reaction>
</comment>
<comment type="subcellular location">
    <subcellularLocation>
        <location evidence="5">Membrane</location>
        <topology evidence="5">Single-pass type I membrane protein</topology>
    </subcellularLocation>
</comment>
<comment type="similarity">
    <text evidence="5">Belongs to the protein kinase superfamily. TKL Ser/Thr protein kinase family.</text>
</comment>
<feature type="signal peptide" evidence="1">
    <location>
        <begin position="1"/>
        <end position="23"/>
    </location>
</feature>
<feature type="chain" id="PRO_0000358881" description="Probable serine/threonine-protein kinase drkA">
    <location>
        <begin position="24"/>
        <end position="642"/>
    </location>
</feature>
<feature type="topological domain" description="Extracellular" evidence="1">
    <location>
        <begin position="24"/>
        <end position="322"/>
    </location>
</feature>
<feature type="transmembrane region" description="Helical" evidence="1">
    <location>
        <begin position="323"/>
        <end position="343"/>
    </location>
</feature>
<feature type="topological domain" description="Cytoplasmic" evidence="1">
    <location>
        <begin position="344"/>
        <end position="642"/>
    </location>
</feature>
<feature type="domain" description="Protein kinase" evidence="2">
    <location>
        <begin position="374"/>
        <end position="627"/>
    </location>
</feature>
<feature type="region of interest" description="Disordered" evidence="4">
    <location>
        <begin position="106"/>
        <end position="136"/>
    </location>
</feature>
<feature type="compositionally biased region" description="Low complexity" evidence="4">
    <location>
        <begin position="106"/>
        <end position="128"/>
    </location>
</feature>
<feature type="active site" description="Proton acceptor" evidence="2 3">
    <location>
        <position position="497"/>
    </location>
</feature>
<feature type="binding site" evidence="2">
    <location>
        <begin position="380"/>
        <end position="388"/>
    </location>
    <ligand>
        <name>ATP</name>
        <dbReference type="ChEBI" id="CHEBI:30616"/>
    </ligand>
</feature>
<feature type="binding site" evidence="2">
    <location>
        <position position="401"/>
    </location>
    <ligand>
        <name>ATP</name>
        <dbReference type="ChEBI" id="CHEBI:30616"/>
    </ligand>
</feature>
<feature type="glycosylation site" description="N-linked (GlcNAc...) asparagine" evidence="1">
    <location>
        <position position="136"/>
    </location>
</feature>
<feature type="glycosylation site" description="N-linked (GlcNAc...) asparagine" evidence="1">
    <location>
        <position position="140"/>
    </location>
</feature>
<feature type="glycosylation site" description="N-linked (GlcNAc...) asparagine" evidence="1">
    <location>
        <position position="158"/>
    </location>
</feature>
<feature type="glycosylation site" description="N-linked (GlcNAc...) asparagine" evidence="1">
    <location>
        <position position="244"/>
    </location>
</feature>
<feature type="glycosylation site" description="N-linked (GlcNAc...) asparagine" evidence="1">
    <location>
        <position position="271"/>
    </location>
</feature>
<keyword id="KW-0067">ATP-binding</keyword>
<keyword id="KW-0325">Glycoprotein</keyword>
<keyword id="KW-0418">Kinase</keyword>
<keyword id="KW-0472">Membrane</keyword>
<keyword id="KW-0547">Nucleotide-binding</keyword>
<keyword id="KW-1185">Reference proteome</keyword>
<keyword id="KW-0723">Serine/threonine-protein kinase</keyword>
<keyword id="KW-0732">Signal</keyword>
<keyword id="KW-0808">Transferase</keyword>
<keyword id="KW-0812">Transmembrane</keyword>
<keyword id="KW-1133">Transmembrane helix</keyword>